<organism>
    <name type="scientific">Pseudomonas entomophila (strain L48)</name>
    <dbReference type="NCBI Taxonomy" id="384676"/>
    <lineage>
        <taxon>Bacteria</taxon>
        <taxon>Pseudomonadati</taxon>
        <taxon>Pseudomonadota</taxon>
        <taxon>Gammaproteobacteria</taxon>
        <taxon>Pseudomonadales</taxon>
        <taxon>Pseudomonadaceae</taxon>
        <taxon>Pseudomonas</taxon>
    </lineage>
</organism>
<accession>Q1IDL9</accession>
<protein>
    <recommendedName>
        <fullName evidence="1">23S rRNA (uracil(1939)-C(5))-methyltransferase RlmD</fullName>
        <ecNumber evidence="1">2.1.1.190</ecNumber>
    </recommendedName>
    <alternativeName>
        <fullName evidence="1">23S rRNA(m5U1939)-methyltransferase</fullName>
    </alternativeName>
</protein>
<feature type="chain" id="PRO_0000282053" description="23S rRNA (uracil(1939)-C(5))-methyltransferase RlmD">
    <location>
        <begin position="1"/>
        <end position="452"/>
    </location>
</feature>
<feature type="domain" description="TRAM" evidence="1">
    <location>
        <begin position="22"/>
        <end position="80"/>
    </location>
</feature>
<feature type="region of interest" description="Disordered" evidence="2">
    <location>
        <begin position="1"/>
        <end position="23"/>
    </location>
</feature>
<feature type="active site" description="Nucleophile" evidence="1">
    <location>
        <position position="409"/>
    </location>
</feature>
<feature type="binding site" evidence="1">
    <location>
        <position position="93"/>
    </location>
    <ligand>
        <name>[4Fe-4S] cluster</name>
        <dbReference type="ChEBI" id="CHEBI:49883"/>
    </ligand>
</feature>
<feature type="binding site" evidence="1">
    <location>
        <position position="99"/>
    </location>
    <ligand>
        <name>[4Fe-4S] cluster</name>
        <dbReference type="ChEBI" id="CHEBI:49883"/>
    </ligand>
</feature>
<feature type="binding site" evidence="1">
    <location>
        <position position="102"/>
    </location>
    <ligand>
        <name>[4Fe-4S] cluster</name>
        <dbReference type="ChEBI" id="CHEBI:49883"/>
    </ligand>
</feature>
<feature type="binding site" evidence="1">
    <location>
        <position position="181"/>
    </location>
    <ligand>
        <name>[4Fe-4S] cluster</name>
        <dbReference type="ChEBI" id="CHEBI:49883"/>
    </ligand>
</feature>
<feature type="binding site" evidence="1">
    <location>
        <position position="285"/>
    </location>
    <ligand>
        <name>S-adenosyl-L-methionine</name>
        <dbReference type="ChEBI" id="CHEBI:59789"/>
    </ligand>
</feature>
<feature type="binding site" evidence="1">
    <location>
        <position position="314"/>
    </location>
    <ligand>
        <name>S-adenosyl-L-methionine</name>
        <dbReference type="ChEBI" id="CHEBI:59789"/>
    </ligand>
</feature>
<feature type="binding site" evidence="1">
    <location>
        <position position="319"/>
    </location>
    <ligand>
        <name>S-adenosyl-L-methionine</name>
        <dbReference type="ChEBI" id="CHEBI:59789"/>
    </ligand>
</feature>
<feature type="binding site" evidence="1">
    <location>
        <position position="335"/>
    </location>
    <ligand>
        <name>S-adenosyl-L-methionine</name>
        <dbReference type="ChEBI" id="CHEBI:59789"/>
    </ligand>
</feature>
<feature type="binding site" evidence="1">
    <location>
        <position position="362"/>
    </location>
    <ligand>
        <name>S-adenosyl-L-methionine</name>
        <dbReference type="ChEBI" id="CHEBI:59789"/>
    </ligand>
</feature>
<feature type="binding site" evidence="1">
    <location>
        <position position="383"/>
    </location>
    <ligand>
        <name>S-adenosyl-L-methionine</name>
        <dbReference type="ChEBI" id="CHEBI:59789"/>
    </ligand>
</feature>
<gene>
    <name evidence="1" type="primary">rlmD</name>
    <name type="synonym">rumA</name>
    <name type="ordered locus">PSEEN1363</name>
</gene>
<keyword id="KW-0004">4Fe-4S</keyword>
<keyword id="KW-0408">Iron</keyword>
<keyword id="KW-0411">Iron-sulfur</keyword>
<keyword id="KW-0479">Metal-binding</keyword>
<keyword id="KW-0489">Methyltransferase</keyword>
<keyword id="KW-0698">rRNA processing</keyword>
<keyword id="KW-0949">S-adenosyl-L-methionine</keyword>
<keyword id="KW-0808">Transferase</keyword>
<proteinExistence type="inferred from homology"/>
<evidence type="ECO:0000255" key="1">
    <source>
        <dbReference type="HAMAP-Rule" id="MF_01010"/>
    </source>
</evidence>
<evidence type="ECO:0000256" key="2">
    <source>
        <dbReference type="SAM" id="MobiDB-lite"/>
    </source>
</evidence>
<comment type="function">
    <text evidence="1">Catalyzes the formation of 5-methyl-uridine at position 1939 (m5U1939) in 23S rRNA.</text>
</comment>
<comment type="catalytic activity">
    <reaction evidence="1">
        <text>uridine(1939) in 23S rRNA + S-adenosyl-L-methionine = 5-methyluridine(1939) in 23S rRNA + S-adenosyl-L-homocysteine + H(+)</text>
        <dbReference type="Rhea" id="RHEA:42908"/>
        <dbReference type="Rhea" id="RHEA-COMP:10278"/>
        <dbReference type="Rhea" id="RHEA-COMP:10279"/>
        <dbReference type="ChEBI" id="CHEBI:15378"/>
        <dbReference type="ChEBI" id="CHEBI:57856"/>
        <dbReference type="ChEBI" id="CHEBI:59789"/>
        <dbReference type="ChEBI" id="CHEBI:65315"/>
        <dbReference type="ChEBI" id="CHEBI:74447"/>
        <dbReference type="EC" id="2.1.1.190"/>
    </reaction>
</comment>
<comment type="similarity">
    <text evidence="1">Belongs to the class I-like SAM-binding methyltransferase superfamily. RNA M5U methyltransferase family. RlmD subfamily.</text>
</comment>
<name>RLMD_PSEE4</name>
<dbReference type="EC" id="2.1.1.190" evidence="1"/>
<dbReference type="EMBL" id="CT573326">
    <property type="protein sequence ID" value="CAK14240.1"/>
    <property type="molecule type" value="Genomic_DNA"/>
</dbReference>
<dbReference type="RefSeq" id="WP_011532656.1">
    <property type="nucleotide sequence ID" value="NC_008027.1"/>
</dbReference>
<dbReference type="SMR" id="Q1IDL9"/>
<dbReference type="STRING" id="384676.PSEEN1363"/>
<dbReference type="GeneID" id="32804627"/>
<dbReference type="KEGG" id="pen:PSEEN1363"/>
<dbReference type="eggNOG" id="COG2265">
    <property type="taxonomic scope" value="Bacteria"/>
</dbReference>
<dbReference type="HOGENOM" id="CLU_014689_8_2_6"/>
<dbReference type="OrthoDB" id="9804590at2"/>
<dbReference type="Proteomes" id="UP000000658">
    <property type="component" value="Chromosome"/>
</dbReference>
<dbReference type="GO" id="GO:0051539">
    <property type="term" value="F:4 iron, 4 sulfur cluster binding"/>
    <property type="evidence" value="ECO:0007669"/>
    <property type="project" value="UniProtKB-KW"/>
</dbReference>
<dbReference type="GO" id="GO:0005506">
    <property type="term" value="F:iron ion binding"/>
    <property type="evidence" value="ECO:0007669"/>
    <property type="project" value="UniProtKB-UniRule"/>
</dbReference>
<dbReference type="GO" id="GO:0003723">
    <property type="term" value="F:RNA binding"/>
    <property type="evidence" value="ECO:0007669"/>
    <property type="project" value="InterPro"/>
</dbReference>
<dbReference type="GO" id="GO:0070041">
    <property type="term" value="F:rRNA (uridine-C5-)-methyltransferase activity"/>
    <property type="evidence" value="ECO:0007669"/>
    <property type="project" value="UniProtKB-UniRule"/>
</dbReference>
<dbReference type="GO" id="GO:0070475">
    <property type="term" value="P:rRNA base methylation"/>
    <property type="evidence" value="ECO:0007669"/>
    <property type="project" value="TreeGrafter"/>
</dbReference>
<dbReference type="CDD" id="cd02440">
    <property type="entry name" value="AdoMet_MTases"/>
    <property type="match status" value="1"/>
</dbReference>
<dbReference type="FunFam" id="3.40.50.150:FF:000009">
    <property type="entry name" value="23S rRNA (Uracil(1939)-C(5))-methyltransferase RlmD"/>
    <property type="match status" value="1"/>
</dbReference>
<dbReference type="Gene3D" id="2.40.50.1070">
    <property type="match status" value="1"/>
</dbReference>
<dbReference type="Gene3D" id="2.40.50.140">
    <property type="entry name" value="Nucleic acid-binding proteins"/>
    <property type="match status" value="1"/>
</dbReference>
<dbReference type="Gene3D" id="3.40.50.150">
    <property type="entry name" value="Vaccinia Virus protein VP39"/>
    <property type="match status" value="1"/>
</dbReference>
<dbReference type="HAMAP" id="MF_01010">
    <property type="entry name" value="23SrRNA_methyltr_RlmD"/>
    <property type="match status" value="1"/>
</dbReference>
<dbReference type="InterPro" id="IPR001566">
    <property type="entry name" value="23S_rRNA_MeTrfase_RlmD"/>
</dbReference>
<dbReference type="InterPro" id="IPR030390">
    <property type="entry name" value="MeTrfase_TrmA_AS"/>
</dbReference>
<dbReference type="InterPro" id="IPR030391">
    <property type="entry name" value="MeTrfase_TrmA_CS"/>
</dbReference>
<dbReference type="InterPro" id="IPR012340">
    <property type="entry name" value="NA-bd_OB-fold"/>
</dbReference>
<dbReference type="InterPro" id="IPR029063">
    <property type="entry name" value="SAM-dependent_MTases_sf"/>
</dbReference>
<dbReference type="InterPro" id="IPR002792">
    <property type="entry name" value="TRAM_dom"/>
</dbReference>
<dbReference type="InterPro" id="IPR010280">
    <property type="entry name" value="U5_MeTrfase_fam"/>
</dbReference>
<dbReference type="NCBIfam" id="NF009639">
    <property type="entry name" value="PRK13168.1"/>
    <property type="match status" value="1"/>
</dbReference>
<dbReference type="NCBIfam" id="TIGR00479">
    <property type="entry name" value="rumA"/>
    <property type="match status" value="1"/>
</dbReference>
<dbReference type="PANTHER" id="PTHR11061:SF49">
    <property type="entry name" value="23S RRNA (URACIL(1939)-C(5))-METHYLTRANSFERASE RLMD"/>
    <property type="match status" value="1"/>
</dbReference>
<dbReference type="PANTHER" id="PTHR11061">
    <property type="entry name" value="RNA M5U METHYLTRANSFERASE"/>
    <property type="match status" value="1"/>
</dbReference>
<dbReference type="Pfam" id="PF01938">
    <property type="entry name" value="TRAM"/>
    <property type="match status" value="1"/>
</dbReference>
<dbReference type="Pfam" id="PF05958">
    <property type="entry name" value="tRNA_U5-meth_tr"/>
    <property type="match status" value="1"/>
</dbReference>
<dbReference type="SUPFAM" id="SSF50249">
    <property type="entry name" value="Nucleic acid-binding proteins"/>
    <property type="match status" value="1"/>
</dbReference>
<dbReference type="SUPFAM" id="SSF53335">
    <property type="entry name" value="S-adenosyl-L-methionine-dependent methyltransferases"/>
    <property type="match status" value="1"/>
</dbReference>
<dbReference type="PROSITE" id="PS51687">
    <property type="entry name" value="SAM_MT_RNA_M5U"/>
    <property type="match status" value="1"/>
</dbReference>
<dbReference type="PROSITE" id="PS50926">
    <property type="entry name" value="TRAM"/>
    <property type="match status" value="1"/>
</dbReference>
<dbReference type="PROSITE" id="PS01230">
    <property type="entry name" value="TRMA_1"/>
    <property type="match status" value="1"/>
</dbReference>
<dbReference type="PROSITE" id="PS01231">
    <property type="entry name" value="TRMA_2"/>
    <property type="match status" value="1"/>
</dbReference>
<sequence length="452" mass="49420">MSRKKSNGGLRFQPAGGNRATQIPVGKKQRLLIERVAGDGRGIAFIEGRTWFVSGALGGEEVEARVLGARGKVVEARLERVFQASPERREAPCRHYARCGGCNLQHLPHDGQLALKQRLLAEQLQRVAGVQPEEWAAPLCGPEFGYRRRARVAVRWDVKQRQLDVGFRAEASQDIVAIDDCPVLVQPLQAIMRHLPTVLRSLSKPQTLGHVELFSGTAEAVLVRHVAALPAEDLARLEAFCREAGAQLWLQGEGDPAPVDAAQRLGFALEPWGMELAWRPGDFVQVNAQVNTLMIQQALAWLAPQAHERVLDLFCGLGNFALPLARQAREVVAVEGVQAMVERAEANAHGNNVYNARFFQADLSQPLAGAEWVAEGFSAVLLDPPRDGAYEVVQGIARLGAKRLVYVSCNPATLARDTQVLVGQGYRLKRAGILDMFPQTAHVEAMALFEAG</sequence>
<reference key="1">
    <citation type="journal article" date="2006" name="Nat. Biotechnol.">
        <title>Complete genome sequence of the entomopathogenic and metabolically versatile soil bacterium Pseudomonas entomophila.</title>
        <authorList>
            <person name="Vodovar N."/>
            <person name="Vallenet D."/>
            <person name="Cruveiller S."/>
            <person name="Rouy Z."/>
            <person name="Barbe V."/>
            <person name="Acosta C."/>
            <person name="Cattolico L."/>
            <person name="Jubin C."/>
            <person name="Lajus A."/>
            <person name="Segurens B."/>
            <person name="Vacherie B."/>
            <person name="Wincker P."/>
            <person name="Weissenbach J."/>
            <person name="Lemaitre B."/>
            <person name="Medigue C."/>
            <person name="Boccard F."/>
        </authorList>
    </citation>
    <scope>NUCLEOTIDE SEQUENCE [LARGE SCALE GENOMIC DNA]</scope>
    <source>
        <strain>L48</strain>
    </source>
</reference>